<evidence type="ECO:0000255" key="1">
    <source>
        <dbReference type="HAMAP-Rule" id="MF_00739"/>
    </source>
</evidence>
<proteinExistence type="inferred from homology"/>
<name>URE3_NOCFA</name>
<accession>Q5YWS0</accession>
<reference key="1">
    <citation type="journal article" date="2004" name="Proc. Natl. Acad. Sci. U.S.A.">
        <title>The complete genomic sequence of Nocardia farcinica IFM 10152.</title>
        <authorList>
            <person name="Ishikawa J."/>
            <person name="Yamashita A."/>
            <person name="Mikami Y."/>
            <person name="Hoshino Y."/>
            <person name="Kurita H."/>
            <person name="Hotta K."/>
            <person name="Shiba T."/>
            <person name="Hattori M."/>
        </authorList>
    </citation>
    <scope>NUCLEOTIDE SEQUENCE [LARGE SCALE GENOMIC DNA]</scope>
    <source>
        <strain>IFM 10152</strain>
    </source>
</reference>
<feature type="chain" id="PRO_0000098021" description="Urease subunit gamma">
    <location>
        <begin position="1"/>
        <end position="100"/>
    </location>
</feature>
<organism>
    <name type="scientific">Nocardia farcinica (strain IFM 10152)</name>
    <dbReference type="NCBI Taxonomy" id="247156"/>
    <lineage>
        <taxon>Bacteria</taxon>
        <taxon>Bacillati</taxon>
        <taxon>Actinomycetota</taxon>
        <taxon>Actinomycetes</taxon>
        <taxon>Mycobacteriales</taxon>
        <taxon>Nocardiaceae</taxon>
        <taxon>Nocardia</taxon>
    </lineage>
</organism>
<comment type="catalytic activity">
    <reaction evidence="1">
        <text>urea + 2 H2O + H(+) = hydrogencarbonate + 2 NH4(+)</text>
        <dbReference type="Rhea" id="RHEA:20557"/>
        <dbReference type="ChEBI" id="CHEBI:15377"/>
        <dbReference type="ChEBI" id="CHEBI:15378"/>
        <dbReference type="ChEBI" id="CHEBI:16199"/>
        <dbReference type="ChEBI" id="CHEBI:17544"/>
        <dbReference type="ChEBI" id="CHEBI:28938"/>
        <dbReference type="EC" id="3.5.1.5"/>
    </reaction>
</comment>
<comment type="pathway">
    <text evidence="1">Nitrogen metabolism; urea degradation; CO(2) and NH(3) from urea (urease route): step 1/1.</text>
</comment>
<comment type="subunit">
    <text evidence="1">Heterotrimer of UreA (gamma), UreB (beta) and UreC (alpha) subunits. Three heterotrimers associate to form the active enzyme.</text>
</comment>
<comment type="subcellular location">
    <subcellularLocation>
        <location evidence="1">Cytoplasm</location>
    </subcellularLocation>
</comment>
<comment type="similarity">
    <text evidence="1">Belongs to the urease gamma subunit family.</text>
</comment>
<gene>
    <name evidence="1" type="primary">ureA</name>
    <name type="ordered locus">NFA_25240</name>
</gene>
<keyword id="KW-0963">Cytoplasm</keyword>
<keyword id="KW-0378">Hydrolase</keyword>
<keyword id="KW-1185">Reference proteome</keyword>
<sequence length="100" mass="11062">MRLSPHEQERLLLSYAAELARRRQARGLKLNHPEAVALITDHVLEGARDGRSVAELMASGRTVLTRDDVMTGVPEMIHDVQVEATFPDGTKLVTVHQPIA</sequence>
<dbReference type="EC" id="3.5.1.5" evidence="1"/>
<dbReference type="EMBL" id="AP006618">
    <property type="protein sequence ID" value="BAD57371.1"/>
    <property type="molecule type" value="Genomic_DNA"/>
</dbReference>
<dbReference type="RefSeq" id="WP_011209056.1">
    <property type="nucleotide sequence ID" value="NC_006361.1"/>
</dbReference>
<dbReference type="SMR" id="Q5YWS0"/>
<dbReference type="STRING" id="247156.NFA_25240"/>
<dbReference type="GeneID" id="61133269"/>
<dbReference type="KEGG" id="nfa:NFA_25240"/>
<dbReference type="eggNOG" id="COG0831">
    <property type="taxonomic scope" value="Bacteria"/>
</dbReference>
<dbReference type="HOGENOM" id="CLU_145825_1_0_11"/>
<dbReference type="OrthoDB" id="9797217at2"/>
<dbReference type="UniPathway" id="UPA00258">
    <property type="reaction ID" value="UER00370"/>
</dbReference>
<dbReference type="Proteomes" id="UP000006820">
    <property type="component" value="Chromosome"/>
</dbReference>
<dbReference type="GO" id="GO:0005737">
    <property type="term" value="C:cytoplasm"/>
    <property type="evidence" value="ECO:0007669"/>
    <property type="project" value="UniProtKB-SubCell"/>
</dbReference>
<dbReference type="GO" id="GO:0016151">
    <property type="term" value="F:nickel cation binding"/>
    <property type="evidence" value="ECO:0007669"/>
    <property type="project" value="InterPro"/>
</dbReference>
<dbReference type="GO" id="GO:0009039">
    <property type="term" value="F:urease activity"/>
    <property type="evidence" value="ECO:0007669"/>
    <property type="project" value="UniProtKB-UniRule"/>
</dbReference>
<dbReference type="GO" id="GO:0043419">
    <property type="term" value="P:urea catabolic process"/>
    <property type="evidence" value="ECO:0007669"/>
    <property type="project" value="UniProtKB-UniRule"/>
</dbReference>
<dbReference type="CDD" id="cd00390">
    <property type="entry name" value="Urease_gamma"/>
    <property type="match status" value="1"/>
</dbReference>
<dbReference type="Gene3D" id="3.30.280.10">
    <property type="entry name" value="Urease, gamma-like subunit"/>
    <property type="match status" value="1"/>
</dbReference>
<dbReference type="HAMAP" id="MF_00739">
    <property type="entry name" value="Urease_gamma"/>
    <property type="match status" value="1"/>
</dbReference>
<dbReference type="InterPro" id="IPR012010">
    <property type="entry name" value="Urease_gamma"/>
</dbReference>
<dbReference type="InterPro" id="IPR002026">
    <property type="entry name" value="Urease_gamma/gamma-beta_su"/>
</dbReference>
<dbReference type="InterPro" id="IPR036463">
    <property type="entry name" value="Urease_gamma_sf"/>
</dbReference>
<dbReference type="InterPro" id="IPR050069">
    <property type="entry name" value="Urease_subunit"/>
</dbReference>
<dbReference type="NCBIfam" id="NF009712">
    <property type="entry name" value="PRK13241.1"/>
    <property type="match status" value="1"/>
</dbReference>
<dbReference type="NCBIfam" id="TIGR00193">
    <property type="entry name" value="urease_gam"/>
    <property type="match status" value="1"/>
</dbReference>
<dbReference type="PANTHER" id="PTHR33569">
    <property type="entry name" value="UREASE"/>
    <property type="match status" value="1"/>
</dbReference>
<dbReference type="PANTHER" id="PTHR33569:SF1">
    <property type="entry name" value="UREASE"/>
    <property type="match status" value="1"/>
</dbReference>
<dbReference type="Pfam" id="PF00547">
    <property type="entry name" value="Urease_gamma"/>
    <property type="match status" value="1"/>
</dbReference>
<dbReference type="PIRSF" id="PIRSF001223">
    <property type="entry name" value="Urease_gamma"/>
    <property type="match status" value="1"/>
</dbReference>
<dbReference type="SUPFAM" id="SSF54111">
    <property type="entry name" value="Urease, gamma-subunit"/>
    <property type="match status" value="1"/>
</dbReference>
<protein>
    <recommendedName>
        <fullName evidence="1">Urease subunit gamma</fullName>
        <ecNumber evidence="1">3.5.1.5</ecNumber>
    </recommendedName>
    <alternativeName>
        <fullName evidence="1">Urea amidohydrolase subunit gamma</fullName>
    </alternativeName>
</protein>